<dbReference type="EC" id="2.4.1.325" evidence="1"/>
<dbReference type="EMBL" id="CP000880">
    <property type="protein sequence ID" value="ABX23526.1"/>
    <property type="molecule type" value="Genomic_DNA"/>
</dbReference>
<dbReference type="SMR" id="A9MJ17"/>
<dbReference type="STRING" id="41514.SARI_03726"/>
<dbReference type="CAZy" id="GT56">
    <property type="family name" value="Glycosyltransferase Family 56"/>
</dbReference>
<dbReference type="KEGG" id="ses:SARI_03726"/>
<dbReference type="HOGENOM" id="CLU_066584_0_0_6"/>
<dbReference type="UniPathway" id="UPA00566"/>
<dbReference type="Proteomes" id="UP000002084">
    <property type="component" value="Chromosome"/>
</dbReference>
<dbReference type="GO" id="GO:0005886">
    <property type="term" value="C:plasma membrane"/>
    <property type="evidence" value="ECO:0007669"/>
    <property type="project" value="UniProtKB-SubCell"/>
</dbReference>
<dbReference type="GO" id="GO:0102031">
    <property type="term" value="F:4-acetamido-4,6-dideoxy-D-galactose transferase activity"/>
    <property type="evidence" value="ECO:0007669"/>
    <property type="project" value="UniProtKB-EC"/>
</dbReference>
<dbReference type="GO" id="GO:0008417">
    <property type="term" value="F:fucosyltransferase activity"/>
    <property type="evidence" value="ECO:0007669"/>
    <property type="project" value="InterPro"/>
</dbReference>
<dbReference type="GO" id="GO:0009246">
    <property type="term" value="P:enterobacterial common antigen biosynthetic process"/>
    <property type="evidence" value="ECO:0007669"/>
    <property type="project" value="UniProtKB-UniRule"/>
</dbReference>
<dbReference type="GO" id="GO:0036065">
    <property type="term" value="P:fucosylation"/>
    <property type="evidence" value="ECO:0007669"/>
    <property type="project" value="InterPro"/>
</dbReference>
<dbReference type="HAMAP" id="MF_01002">
    <property type="entry name" value="WecF_RffT"/>
    <property type="match status" value="1"/>
</dbReference>
<dbReference type="InterPro" id="IPR009993">
    <property type="entry name" value="WecF"/>
</dbReference>
<dbReference type="NCBIfam" id="NF002753">
    <property type="entry name" value="PRK02797.1-2"/>
    <property type="match status" value="1"/>
</dbReference>
<dbReference type="NCBIfam" id="NF002754">
    <property type="entry name" value="PRK02797.1-3"/>
    <property type="match status" value="1"/>
</dbReference>
<dbReference type="Pfam" id="PF07429">
    <property type="entry name" value="Glyco_transf_56"/>
    <property type="match status" value="1"/>
</dbReference>
<name>WECF_SALAR</name>
<keyword id="KW-0997">Cell inner membrane</keyword>
<keyword id="KW-1003">Cell membrane</keyword>
<keyword id="KW-0328">Glycosyltransferase</keyword>
<keyword id="KW-0472">Membrane</keyword>
<keyword id="KW-1185">Reference proteome</keyword>
<keyword id="KW-0808">Transferase</keyword>
<comment type="function">
    <text evidence="1">Catalyzes the synthesis of Und-PP-GlcNAc-ManNAcA-Fuc4NAc (Lipid III), the third lipid-linked intermediate involved in ECA synthesis.</text>
</comment>
<comment type="catalytic activity">
    <reaction evidence="1">
        <text>beta-D-ManNAcA-(1-&gt;4)-alpha-D-GlcNAc-di-trans,octa-cis-undecaprenyl diphosphate + dTDP-4-acetamido-4,6-dideoxy-alpha-D-galactose = alpha-D-FucNAc4-(1-&gt;4)-beta-D-ManNAcA-(1-&gt;4)-D-GlcNAc-undecaprenyl diphosphate + dTDP + H(+)</text>
        <dbReference type="Rhea" id="RHEA:28759"/>
        <dbReference type="ChEBI" id="CHEBI:15378"/>
        <dbReference type="ChEBI" id="CHEBI:58369"/>
        <dbReference type="ChEBI" id="CHEBI:61495"/>
        <dbReference type="ChEBI" id="CHEBI:61496"/>
        <dbReference type="ChEBI" id="CHEBI:68493"/>
        <dbReference type="EC" id="2.4.1.325"/>
    </reaction>
</comment>
<comment type="pathway">
    <text evidence="1">Bacterial outer membrane biogenesis; enterobacterial common antigen biosynthesis.</text>
</comment>
<comment type="subcellular location">
    <subcellularLocation>
        <location evidence="1">Cell inner membrane</location>
        <topology evidence="1">Peripheral membrane protein</topology>
    </subcellularLocation>
</comment>
<comment type="similarity">
    <text evidence="1">Belongs to the glycosyltransferase 56 family.</text>
</comment>
<evidence type="ECO:0000255" key="1">
    <source>
        <dbReference type="HAMAP-Rule" id="MF_01002"/>
    </source>
</evidence>
<sequence>MTVLIHVLGSDIPHHNHTVLRFFNDTLASTNEHAREFMVAGEDNGFTESCPALSLRFYGSKKALAQAVIAKAKANRRQRFFFHGQFNTSLWLALLSGGIKPAQFYWHIWGADLYEASSGLKFRFFYPIRRIAQGRVGGVFATRGDLSYFARQHPGVRGELLYFPTRMDPSLNSLAIECQRAGKLTILVGNSGDRSNEHITALRAVHQQFGDTVNVVVPMGYPANNQAYIDEVRQEGLALFSAENLQILSEKMEFDAYLALLRQCDLGYFIFARQQGIGTLCLLIQANIPCVLNRDNPFWQDMAEQHLPVLFTTDDLSERVVREAQRQLASVDKSGITFFSPNYLQPWHNALRIAAGEAE</sequence>
<feature type="chain" id="PRO_1000083950" description="TDP-N-acetylfucosamine:lipid II N-acetylfucosaminyltransferase">
    <location>
        <begin position="1"/>
        <end position="359"/>
    </location>
</feature>
<reference key="1">
    <citation type="submission" date="2007-11" db="EMBL/GenBank/DDBJ databases">
        <authorList>
            <consortium name="The Salmonella enterica serovar Arizonae Genome Sequencing Project"/>
            <person name="McClelland M."/>
            <person name="Sanderson E.K."/>
            <person name="Porwollik S."/>
            <person name="Spieth J."/>
            <person name="Clifton W.S."/>
            <person name="Fulton R."/>
            <person name="Chunyan W."/>
            <person name="Wollam A."/>
            <person name="Shah N."/>
            <person name="Pepin K."/>
            <person name="Bhonagiri V."/>
            <person name="Nash W."/>
            <person name="Johnson M."/>
            <person name="Thiruvilangam P."/>
            <person name="Wilson R."/>
        </authorList>
    </citation>
    <scope>NUCLEOTIDE SEQUENCE [LARGE SCALE GENOMIC DNA]</scope>
    <source>
        <strain>ATCC BAA-731 / CDC346-86 / RSK2980</strain>
    </source>
</reference>
<protein>
    <recommendedName>
        <fullName evidence="1">TDP-N-acetylfucosamine:lipid II N-acetylfucosaminyltransferase</fullName>
        <ecNumber evidence="1">2.4.1.325</ecNumber>
    </recommendedName>
    <alternativeName>
        <fullName evidence="1">4-alpha-L-fucosyltransferase</fullName>
    </alternativeName>
    <alternativeName>
        <fullName evidence="1">TDP-Fuc4NAc:lipid II Fuc4NAc transferase</fullName>
        <shortName evidence="1">Fuc4NAc transferase</shortName>
    </alternativeName>
</protein>
<organism>
    <name type="scientific">Salmonella arizonae (strain ATCC BAA-731 / CDC346-86 / RSK2980)</name>
    <dbReference type="NCBI Taxonomy" id="41514"/>
    <lineage>
        <taxon>Bacteria</taxon>
        <taxon>Pseudomonadati</taxon>
        <taxon>Pseudomonadota</taxon>
        <taxon>Gammaproteobacteria</taxon>
        <taxon>Enterobacterales</taxon>
        <taxon>Enterobacteriaceae</taxon>
        <taxon>Salmonella</taxon>
    </lineage>
</organism>
<proteinExistence type="inferred from homology"/>
<accession>A9MJ17</accession>
<gene>
    <name evidence="1" type="primary">wecF</name>
    <name evidence="1" type="synonym">rffT</name>
    <name type="ordered locus">SARI_03726</name>
</gene>